<evidence type="ECO:0000255" key="1">
    <source>
        <dbReference type="HAMAP-Rule" id="MF_00067"/>
    </source>
</evidence>
<name>GMHA_NITV2</name>
<dbReference type="EC" id="5.3.1.28" evidence="1"/>
<dbReference type="EMBL" id="AE017285">
    <property type="protein sequence ID" value="AAS96365.1"/>
    <property type="molecule type" value="Genomic_DNA"/>
</dbReference>
<dbReference type="RefSeq" id="WP_010939175.1">
    <property type="nucleotide sequence ID" value="NC_002937.3"/>
</dbReference>
<dbReference type="RefSeq" id="YP_011106.1">
    <property type="nucleotide sequence ID" value="NC_002937.3"/>
</dbReference>
<dbReference type="SMR" id="Q72AV1"/>
<dbReference type="STRING" id="882.DVU_1889"/>
<dbReference type="PaxDb" id="882-DVU_1889"/>
<dbReference type="EnsemblBacteria" id="AAS96365">
    <property type="protein sequence ID" value="AAS96365"/>
    <property type="gene ID" value="DVU_1889"/>
</dbReference>
<dbReference type="KEGG" id="dvu:DVU_1889"/>
<dbReference type="PATRIC" id="fig|882.5.peg.1731"/>
<dbReference type="eggNOG" id="COG0279">
    <property type="taxonomic scope" value="Bacteria"/>
</dbReference>
<dbReference type="HOGENOM" id="CLU_080999_3_0_7"/>
<dbReference type="OrthoDB" id="9810929at2"/>
<dbReference type="PhylomeDB" id="Q72AV1"/>
<dbReference type="UniPathway" id="UPA00041">
    <property type="reaction ID" value="UER00436"/>
</dbReference>
<dbReference type="Proteomes" id="UP000002194">
    <property type="component" value="Chromosome"/>
</dbReference>
<dbReference type="GO" id="GO:0005737">
    <property type="term" value="C:cytoplasm"/>
    <property type="evidence" value="ECO:0007669"/>
    <property type="project" value="UniProtKB-SubCell"/>
</dbReference>
<dbReference type="GO" id="GO:0097367">
    <property type="term" value="F:carbohydrate derivative binding"/>
    <property type="evidence" value="ECO:0007669"/>
    <property type="project" value="InterPro"/>
</dbReference>
<dbReference type="GO" id="GO:0008968">
    <property type="term" value="F:D-sedoheptulose 7-phosphate isomerase activity"/>
    <property type="evidence" value="ECO:0007669"/>
    <property type="project" value="UniProtKB-UniRule"/>
</dbReference>
<dbReference type="GO" id="GO:0008270">
    <property type="term" value="F:zinc ion binding"/>
    <property type="evidence" value="ECO:0007669"/>
    <property type="project" value="UniProtKB-UniRule"/>
</dbReference>
<dbReference type="GO" id="GO:0005975">
    <property type="term" value="P:carbohydrate metabolic process"/>
    <property type="evidence" value="ECO:0007669"/>
    <property type="project" value="UniProtKB-UniRule"/>
</dbReference>
<dbReference type="GO" id="GO:2001061">
    <property type="term" value="P:D-glycero-D-manno-heptose 7-phosphate biosynthetic process"/>
    <property type="evidence" value="ECO:0007669"/>
    <property type="project" value="UniProtKB-UniPathway"/>
</dbReference>
<dbReference type="CDD" id="cd05006">
    <property type="entry name" value="SIS_GmhA"/>
    <property type="match status" value="1"/>
</dbReference>
<dbReference type="Gene3D" id="3.40.50.10490">
    <property type="entry name" value="Glucose-6-phosphate isomerase like protein, domain 1"/>
    <property type="match status" value="1"/>
</dbReference>
<dbReference type="HAMAP" id="MF_00067">
    <property type="entry name" value="GmhA"/>
    <property type="match status" value="1"/>
</dbReference>
<dbReference type="InterPro" id="IPR035461">
    <property type="entry name" value="GmhA/DiaA"/>
</dbReference>
<dbReference type="InterPro" id="IPR004515">
    <property type="entry name" value="Phosphoheptose_Isoase"/>
</dbReference>
<dbReference type="InterPro" id="IPR001347">
    <property type="entry name" value="SIS_dom"/>
</dbReference>
<dbReference type="InterPro" id="IPR046348">
    <property type="entry name" value="SIS_dom_sf"/>
</dbReference>
<dbReference type="InterPro" id="IPR050099">
    <property type="entry name" value="SIS_GmhA/DiaA_subfam"/>
</dbReference>
<dbReference type="PANTHER" id="PTHR30390:SF6">
    <property type="entry name" value="DNAA INITIATOR-ASSOCIATING PROTEIN DIAA"/>
    <property type="match status" value="1"/>
</dbReference>
<dbReference type="PANTHER" id="PTHR30390">
    <property type="entry name" value="SEDOHEPTULOSE 7-PHOSPHATE ISOMERASE / DNAA INITIATOR-ASSOCIATING FACTOR FOR REPLICATION INITIATION"/>
    <property type="match status" value="1"/>
</dbReference>
<dbReference type="Pfam" id="PF13580">
    <property type="entry name" value="SIS_2"/>
    <property type="match status" value="1"/>
</dbReference>
<dbReference type="SUPFAM" id="SSF53697">
    <property type="entry name" value="SIS domain"/>
    <property type="match status" value="1"/>
</dbReference>
<dbReference type="PROSITE" id="PS51464">
    <property type="entry name" value="SIS"/>
    <property type="match status" value="1"/>
</dbReference>
<protein>
    <recommendedName>
        <fullName evidence="1">Phosphoheptose isomerase</fullName>
        <ecNumber evidence="1">5.3.1.28</ecNumber>
    </recommendedName>
    <alternativeName>
        <fullName evidence="1">Sedoheptulose 7-phosphate isomerase</fullName>
    </alternativeName>
</protein>
<comment type="function">
    <text evidence="1">Catalyzes the isomerization of sedoheptulose 7-phosphate in D-glycero-D-manno-heptose 7-phosphate.</text>
</comment>
<comment type="catalytic activity">
    <reaction evidence="1">
        <text>2 D-sedoheptulose 7-phosphate = D-glycero-alpha-D-manno-heptose 7-phosphate + D-glycero-beta-D-manno-heptose 7-phosphate</text>
        <dbReference type="Rhea" id="RHEA:27489"/>
        <dbReference type="ChEBI" id="CHEBI:57483"/>
        <dbReference type="ChEBI" id="CHEBI:60203"/>
        <dbReference type="ChEBI" id="CHEBI:60204"/>
        <dbReference type="EC" id="5.3.1.28"/>
    </reaction>
</comment>
<comment type="cofactor">
    <cofactor evidence="1">
        <name>Zn(2+)</name>
        <dbReference type="ChEBI" id="CHEBI:29105"/>
    </cofactor>
    <text evidence="1">Binds 1 zinc ion per subunit.</text>
</comment>
<comment type="pathway">
    <text evidence="1">Carbohydrate biosynthesis; D-glycero-D-manno-heptose 7-phosphate biosynthesis; D-glycero-alpha-D-manno-heptose 7-phosphate and D-glycero-beta-D-manno-heptose 7-phosphate from sedoheptulose 7-phosphate: step 1/1.</text>
</comment>
<comment type="subunit">
    <text evidence="1">Homotetramer.</text>
</comment>
<comment type="subcellular location">
    <subcellularLocation>
        <location evidence="1">Cytoplasm</location>
    </subcellularLocation>
</comment>
<comment type="miscellaneous">
    <text evidence="1">The reaction produces a racemic mixture of D-glycero-alpha-D-manno-heptose 7-phosphate and D-glycero-beta-D-manno-heptose 7-phosphate.</text>
</comment>
<comment type="similarity">
    <text evidence="1">Belongs to the SIS family. GmhA subfamily.</text>
</comment>
<accession>Q72AV1</accession>
<feature type="chain" id="PRO_1000009062" description="Phosphoheptose isomerase">
    <location>
        <begin position="1"/>
        <end position="208"/>
    </location>
</feature>
<feature type="domain" description="SIS" evidence="1">
    <location>
        <begin position="38"/>
        <end position="200"/>
    </location>
</feature>
<feature type="binding site" evidence="1">
    <location>
        <begin position="53"/>
        <end position="55"/>
    </location>
    <ligand>
        <name>substrate</name>
    </ligand>
</feature>
<feature type="binding site" evidence="1">
    <location>
        <position position="62"/>
    </location>
    <ligand>
        <name>Zn(2+)</name>
        <dbReference type="ChEBI" id="CHEBI:29105"/>
    </ligand>
</feature>
<feature type="binding site" evidence="1">
    <location>
        <position position="66"/>
    </location>
    <ligand>
        <name>substrate</name>
    </ligand>
</feature>
<feature type="binding site" evidence="1">
    <location>
        <position position="66"/>
    </location>
    <ligand>
        <name>Zn(2+)</name>
        <dbReference type="ChEBI" id="CHEBI:29105"/>
    </ligand>
</feature>
<feature type="binding site" evidence="1">
    <location>
        <begin position="95"/>
        <end position="96"/>
    </location>
    <ligand>
        <name>substrate</name>
    </ligand>
</feature>
<feature type="binding site" evidence="1">
    <location>
        <begin position="121"/>
        <end position="123"/>
    </location>
    <ligand>
        <name>substrate</name>
    </ligand>
</feature>
<feature type="binding site" evidence="1">
    <location>
        <position position="126"/>
    </location>
    <ligand>
        <name>substrate</name>
    </ligand>
</feature>
<feature type="binding site" evidence="1">
    <location>
        <position position="173"/>
    </location>
    <ligand>
        <name>substrate</name>
    </ligand>
</feature>
<feature type="binding site" evidence="1">
    <location>
        <position position="173"/>
    </location>
    <ligand>
        <name>Zn(2+)</name>
        <dbReference type="ChEBI" id="CHEBI:29105"/>
    </ligand>
</feature>
<feature type="binding site" evidence="1">
    <location>
        <position position="181"/>
    </location>
    <ligand>
        <name>Zn(2+)</name>
        <dbReference type="ChEBI" id="CHEBI:29105"/>
    </ligand>
</feature>
<reference key="1">
    <citation type="journal article" date="2004" name="Nat. Biotechnol.">
        <title>The genome sequence of the anaerobic, sulfate-reducing bacterium Desulfovibrio vulgaris Hildenborough.</title>
        <authorList>
            <person name="Heidelberg J.F."/>
            <person name="Seshadri R."/>
            <person name="Haveman S.A."/>
            <person name="Hemme C.L."/>
            <person name="Paulsen I.T."/>
            <person name="Kolonay J.F."/>
            <person name="Eisen J.A."/>
            <person name="Ward N.L."/>
            <person name="Methe B.A."/>
            <person name="Brinkac L.M."/>
            <person name="Daugherty S.C."/>
            <person name="DeBoy R.T."/>
            <person name="Dodson R.J."/>
            <person name="Durkin A.S."/>
            <person name="Madupu R."/>
            <person name="Nelson W.C."/>
            <person name="Sullivan S.A."/>
            <person name="Fouts D.E."/>
            <person name="Haft D.H."/>
            <person name="Selengut J."/>
            <person name="Peterson J.D."/>
            <person name="Davidsen T.M."/>
            <person name="Zafar N."/>
            <person name="Zhou L."/>
            <person name="Radune D."/>
            <person name="Dimitrov G."/>
            <person name="Hance M."/>
            <person name="Tran K."/>
            <person name="Khouri H.M."/>
            <person name="Gill J."/>
            <person name="Utterback T.R."/>
            <person name="Feldblyum T.V."/>
            <person name="Wall J.D."/>
            <person name="Voordouw G."/>
            <person name="Fraser C.M."/>
        </authorList>
    </citation>
    <scope>NUCLEOTIDE SEQUENCE [LARGE SCALE GENOMIC DNA]</scope>
    <source>
        <strain>ATCC 29579 / DSM 644 / CCUG 34227 / NCIMB 8303 / VKM B-1760 / Hildenborough</strain>
    </source>
</reference>
<sequence length="208" mass="22429">MTEEARRIVIEHAVEGTRLRESYFNGNADKVVDGARRMAVTLAKGHKLLFCGNGGSAADAQHLAAEFVNRFQMERPPLPAIALTTDTSIITAIGNDYSFDQIFEKQVQALGNEGDMLVGISTSGNSPNVVRAMHAARERGLATMGLTGRGGGEMAGLCDILFDVDHGRTALVQEVHITIGHLLCGLTDHFLFENVLALQPWLKDATNA</sequence>
<organism>
    <name type="scientific">Nitratidesulfovibrio vulgaris (strain ATCC 29579 / DSM 644 / CCUG 34227 / NCIMB 8303 / VKM B-1760 / Hildenborough)</name>
    <name type="common">Desulfovibrio vulgaris</name>
    <dbReference type="NCBI Taxonomy" id="882"/>
    <lineage>
        <taxon>Bacteria</taxon>
        <taxon>Pseudomonadati</taxon>
        <taxon>Thermodesulfobacteriota</taxon>
        <taxon>Desulfovibrionia</taxon>
        <taxon>Desulfovibrionales</taxon>
        <taxon>Desulfovibrionaceae</taxon>
        <taxon>Nitratidesulfovibrio</taxon>
    </lineage>
</organism>
<proteinExistence type="inferred from homology"/>
<keyword id="KW-0119">Carbohydrate metabolism</keyword>
<keyword id="KW-0963">Cytoplasm</keyword>
<keyword id="KW-0413">Isomerase</keyword>
<keyword id="KW-0479">Metal-binding</keyword>
<keyword id="KW-1185">Reference proteome</keyword>
<keyword id="KW-0862">Zinc</keyword>
<gene>
    <name evidence="1" type="primary">gmhA</name>
    <name type="ordered locus">DVU_1889</name>
</gene>